<comment type="function">
    <text evidence="2 3 4 6">Antimicrobial and mast cell degranulating peptide. Shows broad-spectrum antimicrobial activity against the Gram-positive bacteria S.aureus ATCC 6538 (MIC=5 ug/ml), S.saprophyticus CS (MIC=5 ug/ml), S.epidermidis CS (MIC=5 ug/ml), B.subtilis CCT 2471 (MIC=40 ug/ml), and the Gram-negative bacteria E.coli CCT 1371 (MIC=20 ug/ml), E.coli ATCC 25922 (MIC=50 ug/ml), and P.aeruginosa ATCC 15442 (MIC=20 ug/ml). Also permeates anionic liposomes. Has little hemolytic activity. Blocks the lobster neuromuscular transmission. Induces the depolarization of the muscle membrane (PubMed:10775751, PubMed:15317499). Its mast cell degranulation activity may be related to the activation of G-protein coupled receptors in mast cells as well as interaction with other proteins located in cell endosomal membranes in the mast cells (By similarity).</text>
</comment>
<comment type="subcellular location">
    <subcellularLocation>
        <location evidence="4 5">Secreted</location>
    </subcellularLocation>
    <subcellularLocation>
        <location>Target cell membrane</location>
    </subcellularLocation>
    <text evidence="1">Assumes an amphipathic alpha-helical conformation in a lipid environment. Forms a membrane channel in the prey (By similarity).</text>
</comment>
<comment type="tissue specificity">
    <text evidence="10 11">Expressed by the venom gland.</text>
</comment>
<comment type="PTM">
    <text evidence="4 6">C-terminal amidation is important for the stabilization of the secondary structure in alpha-helical conformation and for activity (PubMed:15317499). The non-amidated analog eumenin mastoparan AF1 (EMP-AF1) has a lower level of alpha helical structure than the amidated peptide, as well as a reduced antimicrobial potency on both Gram-positive and Gram-negative bacteria (PubMed:15317499). In addition, this non-amidated analog shows a reduced mast cell degranulating activity and is devoid of hemolytic activity (PubMed:10775751).</text>
</comment>
<comment type="mass spectrometry"/>
<comment type="similarity">
    <text evidence="9">Belongs to the MCD family. Mastoparan subfamily.</text>
</comment>
<feature type="peptide" id="PRO_0000044052" description="Eumenine mastoparan-AF" evidence="4 5">
    <location>
        <begin position="1"/>
        <end position="14"/>
    </location>
</feature>
<feature type="modified residue" description="Leucine amide" evidence="5">
    <location>
        <position position="14"/>
    </location>
</feature>
<name>MAST_ANTFM</name>
<organism>
    <name type="scientific">Anterhynchium flavomarginatum micado</name>
    <name type="common">Solitary wasp</name>
    <dbReference type="NCBI Taxonomy" id="329991"/>
    <lineage>
        <taxon>Eukaryota</taxon>
        <taxon>Metazoa</taxon>
        <taxon>Ecdysozoa</taxon>
        <taxon>Arthropoda</taxon>
        <taxon>Hexapoda</taxon>
        <taxon>Insecta</taxon>
        <taxon>Pterygota</taxon>
        <taxon>Neoptera</taxon>
        <taxon>Endopterygota</taxon>
        <taxon>Hymenoptera</taxon>
        <taxon>Apocrita</taxon>
        <taxon>Aculeata</taxon>
        <taxon>Vespoidea</taxon>
        <taxon>Vespidae</taxon>
        <taxon>Eumeninae</taxon>
        <taxon>Anterhynchium</taxon>
    </lineage>
</organism>
<protein>
    <recommendedName>
        <fullName evidence="7">Eumenine mastoparan-AF</fullName>
        <shortName evidence="7">EMP-AF</shortName>
    </recommendedName>
    <alternativeName>
        <fullName evidence="8">Af-113</fullName>
    </alternativeName>
</protein>
<keyword id="KW-0027">Amidation</keyword>
<keyword id="KW-0044">Antibiotic</keyword>
<keyword id="KW-0929">Antimicrobial</keyword>
<keyword id="KW-0903">Direct protein sequencing</keyword>
<keyword id="KW-1213">G-protein coupled receptor impairing toxin</keyword>
<keyword id="KW-0391">Immunity</keyword>
<keyword id="KW-0399">Innate immunity</keyword>
<keyword id="KW-0467">Mast cell degranulation</keyword>
<keyword id="KW-0472">Membrane</keyword>
<keyword id="KW-0528">Neurotoxin</keyword>
<keyword id="KW-0629">Postsynaptic neurotoxin</keyword>
<keyword id="KW-0964">Secreted</keyword>
<keyword id="KW-1052">Target cell membrane</keyword>
<keyword id="KW-1053">Target membrane</keyword>
<keyword id="KW-0800">Toxin</keyword>
<sequence>INLLKIAKGIIKSL</sequence>
<dbReference type="GO" id="GO:0005576">
    <property type="term" value="C:extracellular region"/>
    <property type="evidence" value="ECO:0007669"/>
    <property type="project" value="UniProtKB-SubCell"/>
</dbReference>
<dbReference type="GO" id="GO:0035792">
    <property type="term" value="C:host cell postsynaptic membrane"/>
    <property type="evidence" value="ECO:0007669"/>
    <property type="project" value="UniProtKB-KW"/>
</dbReference>
<dbReference type="GO" id="GO:0016020">
    <property type="term" value="C:membrane"/>
    <property type="evidence" value="ECO:0007669"/>
    <property type="project" value="UniProtKB-KW"/>
</dbReference>
<dbReference type="GO" id="GO:0044218">
    <property type="term" value="C:other organism cell membrane"/>
    <property type="evidence" value="ECO:0007669"/>
    <property type="project" value="UniProtKB-KW"/>
</dbReference>
<dbReference type="GO" id="GO:0090729">
    <property type="term" value="F:toxin activity"/>
    <property type="evidence" value="ECO:0007669"/>
    <property type="project" value="UniProtKB-KW"/>
</dbReference>
<dbReference type="GO" id="GO:0042742">
    <property type="term" value="P:defense response to bacterium"/>
    <property type="evidence" value="ECO:0007669"/>
    <property type="project" value="UniProtKB-KW"/>
</dbReference>
<dbReference type="GO" id="GO:0045087">
    <property type="term" value="P:innate immune response"/>
    <property type="evidence" value="ECO:0007669"/>
    <property type="project" value="UniProtKB-KW"/>
</dbReference>
<proteinExistence type="evidence at protein level"/>
<evidence type="ECO:0000250" key="1"/>
<evidence type="ECO:0000250" key="2">
    <source>
        <dbReference type="UniProtKB" id="P01514"/>
    </source>
</evidence>
<evidence type="ECO:0000250" key="3">
    <source>
        <dbReference type="UniProtKB" id="P84914"/>
    </source>
</evidence>
<evidence type="ECO:0000269" key="4">
    <source>
    </source>
</evidence>
<evidence type="ECO:0000269" key="5">
    <source>
    </source>
</evidence>
<evidence type="ECO:0000269" key="6">
    <source>
    </source>
</evidence>
<evidence type="ECO:0000303" key="7">
    <source>
    </source>
</evidence>
<evidence type="ECO:0000303" key="8">
    <source>
    </source>
</evidence>
<evidence type="ECO:0000305" key="9"/>
<evidence type="ECO:0000305" key="10">
    <source>
    </source>
</evidence>
<evidence type="ECO:0000305" key="11">
    <source>
    </source>
</evidence>
<reference key="1">
    <citation type="journal article" date="2000" name="Rapid Commun. Mass Spectrom.">
        <title>Advantages of using nested collision induced dissociation/post-source decay with matrix-assisted laser desorption/ionization time-of-flight mass spectrometry: sequencing of novel peptides from wasp venom.</title>
        <authorList>
            <person name="Hisada M."/>
            <person name="Konno K."/>
            <person name="Itagaki Y."/>
            <person name="Naoki H."/>
            <person name="Nakajima T."/>
        </authorList>
    </citation>
    <scope>PROTEIN SEQUENCE</scope>
    <scope>AMIDATION AT LEU-14</scope>
    <scope>SYNTHESIS</scope>
    <scope>IDENTIFICATION BY MASS SPECTROMETRY</scope>
    <scope>SUBCELLULAR LOCATION</scope>
    <source>
        <tissue>Venom</tissue>
    </source>
</reference>
<reference key="2">
    <citation type="journal article" date="2000" name="Toxicon">
        <title>Structure and biological activities of eumenine mastoparan-AF (EMP-AF), a new mast cell degranulating peptide in the venom of the solitary wasp (Anterhynchium flavomarginatum micado).</title>
        <authorList>
            <person name="Konno K."/>
            <person name="Hisada M."/>
            <person name="Naoki H."/>
            <person name="Itagaki Y."/>
            <person name="Kawai N."/>
            <person name="Miwa A."/>
            <person name="Yasuhara T."/>
            <person name="Morimoto Y."/>
            <person name="Nakata Y."/>
        </authorList>
    </citation>
    <scope>PROTEIN SEQUENCE</scope>
    <scope>SYNTHESIS</scope>
    <scope>FUNCTION</scope>
    <scope>MASS SPECTROMETRY</scope>
    <scope>SUBCELLULAR LOCATION</scope>
    <source>
        <tissue>Venom</tissue>
    </source>
</reference>
<reference key="3">
    <citation type="journal article" date="2004" name="J. Pept. Res.">
        <title>Conformation and lytic activity of eumenine mastoparan: a new antimicrobial peptide from wasp venom.</title>
        <authorList>
            <person name="dos Santos Cabrera M.P."/>
            <person name="de Souza B.M."/>
            <person name="Fontana R."/>
            <person name="Konno K."/>
            <person name="Palma M.S."/>
            <person name="de Azevedo W.F. Jr."/>
            <person name="Neto J.R."/>
        </authorList>
    </citation>
    <scope>FUNCTION</scope>
    <scope>SYNTHESIS</scope>
</reference>
<reference key="4">
    <citation type="journal article" date="2016" name="Toxins">
        <title>Peptide toxins in solitary wasp venoms.</title>
        <authorList>
            <person name="Konno K."/>
            <person name="Kazuma K."/>
            <person name="Nihei K."/>
        </authorList>
    </citation>
    <scope>REVIEW</scope>
</reference>
<reference key="5">
    <citation type="journal article" date="2000" name="Acta Crystallogr. D">
        <title>Crystallization and preliminary X-ray diffraction analysis of a eumenine mastoparan toxin: a new class of mast-cell degranulating peptide in the wasp venom.</title>
        <authorList>
            <person name="Canduri F."/>
            <person name="Delatorre P."/>
            <person name="Fadel V."/>
            <person name="Lorenzi C.C.B."/>
            <person name="Pereira J.H."/>
            <person name="Olivieri J.R."/>
            <person name="Ruggiero Neto J."/>
            <person name="Konno K."/>
            <person name="Palma M.S."/>
            <person name="Yamane T."/>
            <person name="de Azevedo W.F. Jr."/>
        </authorList>
    </citation>
    <scope>X-RAY CRYSTALLOGRAPHY (2.7 ANGSTROMS)</scope>
</reference>
<reference key="6">
    <citation type="journal article" date="2001" name="Biochim. Biophys. Acta">
        <title>Preliminary cryocrystallography analysis of an eumenine mastoparan toxin isolated from the venom of the wasp Anterhynchium flavomarginatum micado.</title>
        <authorList>
            <person name="Delatorre P."/>
            <person name="Olivieri J.R."/>
            <person name="Ruggiero Neto J."/>
            <person name="Lorenzi C.C.B."/>
            <person name="Canduri F."/>
            <person name="Fadel V."/>
            <person name="Konno K."/>
            <person name="Palma M.S."/>
            <person name="Yamane T."/>
            <person name="de Azevedo W.F. Jr."/>
        </authorList>
    </citation>
    <scope>X-RAY CRYSTALLOGRAPHY (2.0 ANGSTROMS)</scope>
</reference>
<accession>P0C022</accession>